<name>PPB_BOMMO</name>
<proteinExistence type="evidence at protein level"/>
<organism>
    <name type="scientific">Bombyx mori</name>
    <name type="common">Silk moth</name>
    <dbReference type="NCBI Taxonomy" id="7091"/>
    <lineage>
        <taxon>Eukaryota</taxon>
        <taxon>Metazoa</taxon>
        <taxon>Ecdysozoa</taxon>
        <taxon>Arthropoda</taxon>
        <taxon>Hexapoda</taxon>
        <taxon>Insecta</taxon>
        <taxon>Pterygota</taxon>
        <taxon>Neoptera</taxon>
        <taxon>Endopterygota</taxon>
        <taxon>Lepidoptera</taxon>
        <taxon>Glossata</taxon>
        <taxon>Ditrysia</taxon>
        <taxon>Bombycoidea</taxon>
        <taxon>Bombycidae</taxon>
        <taxon>Bombycinae</taxon>
        <taxon>Bombyx</taxon>
    </lineage>
</organism>
<protein>
    <recommendedName>
        <fullName>Membrane-bound alkaline phosphatase</fullName>
        <shortName>M-ALP</shortName>
        <ecNumber>3.1.3.1</ecNumber>
    </recommendedName>
</protein>
<accession>P29523</accession>
<accession>Q966T9</accession>
<evidence type="ECO:0000250" key="1"/>
<evidence type="ECO:0000255" key="2"/>
<evidence type="ECO:0000255" key="3">
    <source>
        <dbReference type="PROSITE-ProRule" id="PRU10042"/>
    </source>
</evidence>
<evidence type="ECO:0000269" key="4">
    <source>
    </source>
</evidence>
<evidence type="ECO:0000305" key="5"/>
<dbReference type="EC" id="3.1.3.1"/>
<dbReference type="EMBL" id="D90454">
    <property type="protein sequence ID" value="BAA14420.4"/>
    <property type="molecule type" value="mRNA"/>
</dbReference>
<dbReference type="EMBL" id="AB055428">
    <property type="protein sequence ID" value="BAB62745.3"/>
    <property type="molecule type" value="Genomic_DNA"/>
</dbReference>
<dbReference type="PIR" id="S19607">
    <property type="entry name" value="S19607"/>
</dbReference>
<dbReference type="RefSeq" id="NP_001037536.3">
    <property type="nucleotide sequence ID" value="NM_001044071.3"/>
</dbReference>
<dbReference type="SMR" id="P29523"/>
<dbReference type="FunCoup" id="P29523">
    <property type="interactions" value="99"/>
</dbReference>
<dbReference type="STRING" id="7091.P29523"/>
<dbReference type="PaxDb" id="7091-BGIBMGA008818-TA"/>
<dbReference type="EnsemblMetazoa" id="NM_001044071.3">
    <property type="protein sequence ID" value="NP_001037536.3"/>
    <property type="gene ID" value="GeneID_693074"/>
</dbReference>
<dbReference type="GeneID" id="693074"/>
<dbReference type="KEGG" id="bmor:693074"/>
<dbReference type="CTD" id="693074"/>
<dbReference type="eggNOG" id="KOG4126">
    <property type="taxonomic scope" value="Eukaryota"/>
</dbReference>
<dbReference type="HOGENOM" id="CLU_008539_4_0_1"/>
<dbReference type="InParanoid" id="P29523"/>
<dbReference type="OrthoDB" id="519002at7088"/>
<dbReference type="Proteomes" id="UP000005204">
    <property type="component" value="Unassembled WGS sequence"/>
</dbReference>
<dbReference type="GO" id="GO:0005886">
    <property type="term" value="C:plasma membrane"/>
    <property type="evidence" value="ECO:0007669"/>
    <property type="project" value="UniProtKB-SubCell"/>
</dbReference>
<dbReference type="GO" id="GO:0098552">
    <property type="term" value="C:side of membrane"/>
    <property type="evidence" value="ECO:0007669"/>
    <property type="project" value="UniProtKB-KW"/>
</dbReference>
<dbReference type="GO" id="GO:0004035">
    <property type="term" value="F:alkaline phosphatase activity"/>
    <property type="evidence" value="ECO:0007669"/>
    <property type="project" value="UniProtKB-EC"/>
</dbReference>
<dbReference type="GO" id="GO:0046872">
    <property type="term" value="F:metal ion binding"/>
    <property type="evidence" value="ECO:0007669"/>
    <property type="project" value="UniProtKB-KW"/>
</dbReference>
<dbReference type="CDD" id="cd16012">
    <property type="entry name" value="ALP"/>
    <property type="match status" value="1"/>
</dbReference>
<dbReference type="FunFam" id="3.40.720.10:FF:000008">
    <property type="entry name" value="Alkaline phosphatase"/>
    <property type="match status" value="1"/>
</dbReference>
<dbReference type="Gene3D" id="3.40.720.10">
    <property type="entry name" value="Alkaline Phosphatase, subunit A"/>
    <property type="match status" value="1"/>
</dbReference>
<dbReference type="InterPro" id="IPR001952">
    <property type="entry name" value="Alkaline_phosphatase"/>
</dbReference>
<dbReference type="InterPro" id="IPR018299">
    <property type="entry name" value="Alkaline_phosphatase_AS"/>
</dbReference>
<dbReference type="InterPro" id="IPR017850">
    <property type="entry name" value="Alkaline_phosphatase_core_sf"/>
</dbReference>
<dbReference type="PANTHER" id="PTHR11596">
    <property type="entry name" value="ALKALINE PHOSPHATASE"/>
    <property type="match status" value="1"/>
</dbReference>
<dbReference type="PANTHER" id="PTHR11596:SF91">
    <property type="entry name" value="ALKALINE PHOSPHATASE-RELATED"/>
    <property type="match status" value="1"/>
</dbReference>
<dbReference type="Pfam" id="PF00245">
    <property type="entry name" value="Alk_phosphatase"/>
    <property type="match status" value="1"/>
</dbReference>
<dbReference type="PRINTS" id="PR00113">
    <property type="entry name" value="ALKPHPHTASE"/>
</dbReference>
<dbReference type="SMART" id="SM00098">
    <property type="entry name" value="alkPPc"/>
    <property type="match status" value="1"/>
</dbReference>
<dbReference type="SUPFAM" id="SSF53649">
    <property type="entry name" value="Alkaline phosphatase-like"/>
    <property type="match status" value="1"/>
</dbReference>
<dbReference type="PROSITE" id="PS00123">
    <property type="entry name" value="ALKALINE_PHOSPHATASE"/>
    <property type="match status" value="1"/>
</dbReference>
<feature type="signal peptide" evidence="4">
    <location>
        <begin position="1"/>
        <end position="39"/>
    </location>
</feature>
<feature type="chain" id="PRO_0000024047" description="Membrane-bound alkaline phosphatase">
    <location>
        <begin position="40"/>
        <end position="524"/>
    </location>
</feature>
<feature type="propeptide" id="PRO_0000024048" description="Removed in mature form" evidence="2">
    <location>
        <begin position="525"/>
        <end position="550"/>
    </location>
</feature>
<feature type="active site" description="Phosphoserine intermediate" evidence="3">
    <location>
        <position position="133"/>
    </location>
</feature>
<feature type="binding site" evidence="1">
    <location>
        <position position="83"/>
    </location>
    <ligand>
        <name>Mg(2+)</name>
        <dbReference type="ChEBI" id="CHEBI:18420"/>
    </ligand>
</feature>
<feature type="binding site" evidence="1">
    <location>
        <position position="83"/>
    </location>
    <ligand>
        <name>Zn(2+)</name>
        <dbReference type="ChEBI" id="CHEBI:29105"/>
        <label>2</label>
    </ligand>
</feature>
<feature type="binding site" evidence="1">
    <location>
        <position position="196"/>
    </location>
    <ligand>
        <name>Mg(2+)</name>
        <dbReference type="ChEBI" id="CHEBI:18420"/>
    </ligand>
</feature>
<feature type="binding site" evidence="1">
    <location>
        <position position="198"/>
    </location>
    <ligand>
        <name>Mg(2+)</name>
        <dbReference type="ChEBI" id="CHEBI:18420"/>
    </ligand>
</feature>
<feature type="binding site" evidence="1">
    <location>
        <position position="356"/>
    </location>
    <ligand>
        <name>Mg(2+)</name>
        <dbReference type="ChEBI" id="CHEBI:18420"/>
    </ligand>
</feature>
<feature type="binding site" evidence="1">
    <location>
        <position position="361"/>
    </location>
    <ligand>
        <name>Zn(2+)</name>
        <dbReference type="ChEBI" id="CHEBI:29105"/>
        <label>1</label>
    </ligand>
</feature>
<feature type="binding site" evidence="1">
    <location>
        <position position="365"/>
    </location>
    <ligand>
        <name>Zn(2+)</name>
        <dbReference type="ChEBI" id="CHEBI:29105"/>
        <label>1</label>
    </ligand>
</feature>
<feature type="binding site" evidence="1">
    <location>
        <position position="402"/>
    </location>
    <ligand>
        <name>Zn(2+)</name>
        <dbReference type="ChEBI" id="CHEBI:29105"/>
        <label>2</label>
    </ligand>
</feature>
<feature type="binding site" evidence="1">
    <location>
        <position position="403"/>
    </location>
    <ligand>
        <name>Zn(2+)</name>
        <dbReference type="ChEBI" id="CHEBI:29105"/>
        <label>2</label>
    </ligand>
</feature>
<feature type="binding site" evidence="1">
    <location>
        <position position="479"/>
    </location>
    <ligand>
        <name>Zn(2+)</name>
        <dbReference type="ChEBI" id="CHEBI:29105"/>
        <label>1</label>
    </ligand>
</feature>
<feature type="lipid moiety-binding region" description="GPI-anchor amidated serine" evidence="2">
    <location>
        <position position="524"/>
    </location>
</feature>
<sequence length="550" mass="60281">MSTWWLVVVAAAAAAGLVRAEDRYHPERLAAGEASAATRSAAESEASFWVREAQEAIERREREGAGAKQAAGHAKNVVMFLGDGMSVPTLAAARTLLGQRRGQTGEEASLHFEQFPTLGLAKTYCVNAQVPDSSCTATAYLCGVKANQGTLGVTAAVPRHDCEASTDVTKRVQSIAEWALADGRDVGIVTTTRITHASPAGTFAKVANRNWENDNDVKQEGHDVNRCPDIAHQLIKMAPGNKFKVIFGGGRREFLPTTQVDEEGTRGLRTDGRNLIEEWQNDKESQKVSYKYLWNRQELLKLGSSPPDYLLGLFEGSHLQYHLEGDESTEPTLAELTDVAIRVLSRNERGFFLFVEGGRIDHAHHDNYAHLALDETIEMDRAVKVATDALKEDESLVVVTADHTHVMSFNGYSPRGTDVLGTVRSLDSNRMPFMVLSYTNGPGARIQQNGVRPDVTTDANFGALRWRTHTDVPLDSETHGGDDVTVFAWGVHHWMFSGLYEQTHVPHRMAWAACMGPGRHVCVSAATVPTAALLSLLLAAFITLRHQCFL</sequence>
<gene>
    <name type="primary">Alp-m</name>
</gene>
<reference key="1">
    <citation type="journal article" date="1991" name="Biochim. Biophys. Acta">
        <title>Cloning and sequence analysis of membrane-bound alkaline phosphatase cDNA of the silkworm, Bombyx mori.</title>
        <authorList>
            <person name="Itoh M."/>
            <person name="Takeda S."/>
            <person name="Yamamoto H."/>
            <person name="Izumi S."/>
            <person name="Tomino S."/>
            <person name="Eguchi M."/>
        </authorList>
    </citation>
    <scope>NUCLEOTIDE SEQUENCE [MRNA]</scope>
    <scope>PROTEIN SEQUENCE OF 40-46</scope>
    <source>
        <strain>Aojuku</strain>
        <tissue>Midgut</tissue>
    </source>
</reference>
<reference key="2">
    <citation type="submission" date="2013-01" db="EMBL/GenBank/DDBJ databases">
        <authorList>
            <person name="Itoh M."/>
            <person name="Takeda S."/>
            <person name="Yamamoto H."/>
            <person name="Izumi S."/>
            <person name="Tomino S."/>
            <person name="Eguchi M."/>
        </authorList>
    </citation>
    <scope>SEQUENCE REVISION TO 151 AND N-TERMINUS</scope>
</reference>
<reference key="3">
    <citation type="journal article" date="2003" name="Mol. Genet. Genomics">
        <title>Tandem duplication of alkaline phosphatase genes and polymorphism in the intergenic sequence in Bombyx mori.</title>
        <authorList>
            <person name="Itoh M."/>
            <person name="Inoue T."/>
            <person name="Kanamori Y."/>
            <person name="Nishida S."/>
            <person name="Yamaguchi M."/>
        </authorList>
    </citation>
    <scope>NUCLEOTIDE SEQUENCE [GENOMIC DNA]</scope>
    <source>
        <strain>Aojuku</strain>
        <tissue>Midgut</tissue>
    </source>
</reference>
<reference key="4">
    <citation type="submission" date="2013-01" db="EMBL/GenBank/DDBJ databases">
        <authorList>
            <person name="Itoh M."/>
            <person name="Inoue T."/>
            <person name="Kanamori Y."/>
            <person name="Nishida S."/>
            <person name="Yamaguchi M."/>
        </authorList>
    </citation>
    <scope>SEQUENCE REVISION TO 59; 151; 439 AND N-TERMINUS</scope>
</reference>
<comment type="catalytic activity">
    <reaction evidence="3">
        <text>a phosphate monoester + H2O = an alcohol + phosphate</text>
        <dbReference type="Rhea" id="RHEA:15017"/>
        <dbReference type="ChEBI" id="CHEBI:15377"/>
        <dbReference type="ChEBI" id="CHEBI:30879"/>
        <dbReference type="ChEBI" id="CHEBI:43474"/>
        <dbReference type="ChEBI" id="CHEBI:67140"/>
        <dbReference type="EC" id="3.1.3.1"/>
    </reaction>
</comment>
<comment type="cofactor">
    <cofactor evidence="1">
        <name>Mg(2+)</name>
        <dbReference type="ChEBI" id="CHEBI:18420"/>
    </cofactor>
    <text evidence="1">Binds 1 Mg(2+) ion.</text>
</comment>
<comment type="cofactor">
    <cofactor evidence="1">
        <name>Zn(2+)</name>
        <dbReference type="ChEBI" id="CHEBI:29105"/>
    </cofactor>
    <text evidence="1">Binds 2 Zn(2+) ions.</text>
</comment>
<comment type="subcellular location">
    <subcellularLocation>
        <location evidence="1">Cell membrane</location>
        <topology evidence="1">Lipid-anchor</topology>
        <topology evidence="1">GPI-anchor</topology>
    </subcellularLocation>
</comment>
<comment type="tissue specificity">
    <text>Midgut.</text>
</comment>
<comment type="similarity">
    <text evidence="5">Belongs to the alkaline phosphatase family.</text>
</comment>
<keyword id="KW-1003">Cell membrane</keyword>
<keyword id="KW-0903">Direct protein sequencing</keyword>
<keyword id="KW-0325">Glycoprotein</keyword>
<keyword id="KW-0336">GPI-anchor</keyword>
<keyword id="KW-0378">Hydrolase</keyword>
<keyword id="KW-0449">Lipoprotein</keyword>
<keyword id="KW-0460">Magnesium</keyword>
<keyword id="KW-0472">Membrane</keyword>
<keyword id="KW-0479">Metal-binding</keyword>
<keyword id="KW-0597">Phosphoprotein</keyword>
<keyword id="KW-1185">Reference proteome</keyword>
<keyword id="KW-0732">Signal</keyword>
<keyword id="KW-0862">Zinc</keyword>